<organism evidence="7">
    <name type="scientific">Mus musculus</name>
    <name type="common">Mouse</name>
    <dbReference type="NCBI Taxonomy" id="10090"/>
    <lineage>
        <taxon>Eukaryota</taxon>
        <taxon>Metazoa</taxon>
        <taxon>Chordata</taxon>
        <taxon>Craniata</taxon>
        <taxon>Vertebrata</taxon>
        <taxon>Euteleostomi</taxon>
        <taxon>Mammalia</taxon>
        <taxon>Eutheria</taxon>
        <taxon>Euarchontoglires</taxon>
        <taxon>Glires</taxon>
        <taxon>Rodentia</taxon>
        <taxon>Myomorpha</taxon>
        <taxon>Muroidea</taxon>
        <taxon>Muridae</taxon>
        <taxon>Murinae</taxon>
        <taxon>Mus</taxon>
        <taxon>Mus</taxon>
    </lineage>
</organism>
<proteinExistence type="evidence at protein level"/>
<reference key="1">
    <citation type="journal article" date="2002" name="Gene">
        <title>Cloning and expression analysis of the murine homolog of the spinocerebellar ataxia type 7 (SCA7) gene.</title>
        <authorList>
            <person name="Stroem A.-L."/>
            <person name="Jonasson J."/>
            <person name="Hart P."/>
            <person name="Braennstroem T."/>
            <person name="Forsgren L."/>
            <person name="Holmberg M."/>
        </authorList>
    </citation>
    <scope>NUCLEOTIDE SEQUENCE [MRNA]</scope>
    <scope>TISSUE SPECIFICITY</scope>
    <source>
        <strain>ICR</strain>
        <tissue>Brain</tissue>
    </source>
</reference>
<reference key="2">
    <citation type="journal article" date="2005" name="Science">
        <title>The transcriptional landscape of the mammalian genome.</title>
        <authorList>
            <person name="Carninci P."/>
            <person name="Kasukawa T."/>
            <person name="Katayama S."/>
            <person name="Gough J."/>
            <person name="Frith M.C."/>
            <person name="Maeda N."/>
            <person name="Oyama R."/>
            <person name="Ravasi T."/>
            <person name="Lenhard B."/>
            <person name="Wells C."/>
            <person name="Kodzius R."/>
            <person name="Shimokawa K."/>
            <person name="Bajic V.B."/>
            <person name="Brenner S.E."/>
            <person name="Batalov S."/>
            <person name="Forrest A.R."/>
            <person name="Zavolan M."/>
            <person name="Davis M.J."/>
            <person name="Wilming L.G."/>
            <person name="Aidinis V."/>
            <person name="Allen J.E."/>
            <person name="Ambesi-Impiombato A."/>
            <person name="Apweiler R."/>
            <person name="Aturaliya R.N."/>
            <person name="Bailey T.L."/>
            <person name="Bansal M."/>
            <person name="Baxter L."/>
            <person name="Beisel K.W."/>
            <person name="Bersano T."/>
            <person name="Bono H."/>
            <person name="Chalk A.M."/>
            <person name="Chiu K.P."/>
            <person name="Choudhary V."/>
            <person name="Christoffels A."/>
            <person name="Clutterbuck D.R."/>
            <person name="Crowe M.L."/>
            <person name="Dalla E."/>
            <person name="Dalrymple B.P."/>
            <person name="de Bono B."/>
            <person name="Della Gatta G."/>
            <person name="di Bernardo D."/>
            <person name="Down T."/>
            <person name="Engstrom P."/>
            <person name="Fagiolini M."/>
            <person name="Faulkner G."/>
            <person name="Fletcher C.F."/>
            <person name="Fukushima T."/>
            <person name="Furuno M."/>
            <person name="Futaki S."/>
            <person name="Gariboldi M."/>
            <person name="Georgii-Hemming P."/>
            <person name="Gingeras T.R."/>
            <person name="Gojobori T."/>
            <person name="Green R.E."/>
            <person name="Gustincich S."/>
            <person name="Harbers M."/>
            <person name="Hayashi Y."/>
            <person name="Hensch T.K."/>
            <person name="Hirokawa N."/>
            <person name="Hill D."/>
            <person name="Huminiecki L."/>
            <person name="Iacono M."/>
            <person name="Ikeo K."/>
            <person name="Iwama A."/>
            <person name="Ishikawa T."/>
            <person name="Jakt M."/>
            <person name="Kanapin A."/>
            <person name="Katoh M."/>
            <person name="Kawasawa Y."/>
            <person name="Kelso J."/>
            <person name="Kitamura H."/>
            <person name="Kitano H."/>
            <person name="Kollias G."/>
            <person name="Krishnan S.P."/>
            <person name="Kruger A."/>
            <person name="Kummerfeld S.K."/>
            <person name="Kurochkin I.V."/>
            <person name="Lareau L.F."/>
            <person name="Lazarevic D."/>
            <person name="Lipovich L."/>
            <person name="Liu J."/>
            <person name="Liuni S."/>
            <person name="McWilliam S."/>
            <person name="Madan Babu M."/>
            <person name="Madera M."/>
            <person name="Marchionni L."/>
            <person name="Matsuda H."/>
            <person name="Matsuzawa S."/>
            <person name="Miki H."/>
            <person name="Mignone F."/>
            <person name="Miyake S."/>
            <person name="Morris K."/>
            <person name="Mottagui-Tabar S."/>
            <person name="Mulder N."/>
            <person name="Nakano N."/>
            <person name="Nakauchi H."/>
            <person name="Ng P."/>
            <person name="Nilsson R."/>
            <person name="Nishiguchi S."/>
            <person name="Nishikawa S."/>
            <person name="Nori F."/>
            <person name="Ohara O."/>
            <person name="Okazaki Y."/>
            <person name="Orlando V."/>
            <person name="Pang K.C."/>
            <person name="Pavan W.J."/>
            <person name="Pavesi G."/>
            <person name="Pesole G."/>
            <person name="Petrovsky N."/>
            <person name="Piazza S."/>
            <person name="Reed J."/>
            <person name="Reid J.F."/>
            <person name="Ring B.Z."/>
            <person name="Ringwald M."/>
            <person name="Rost B."/>
            <person name="Ruan Y."/>
            <person name="Salzberg S.L."/>
            <person name="Sandelin A."/>
            <person name="Schneider C."/>
            <person name="Schoenbach C."/>
            <person name="Sekiguchi K."/>
            <person name="Semple C.A."/>
            <person name="Seno S."/>
            <person name="Sessa L."/>
            <person name="Sheng Y."/>
            <person name="Shibata Y."/>
            <person name="Shimada H."/>
            <person name="Shimada K."/>
            <person name="Silva D."/>
            <person name="Sinclair B."/>
            <person name="Sperling S."/>
            <person name="Stupka E."/>
            <person name="Sugiura K."/>
            <person name="Sultana R."/>
            <person name="Takenaka Y."/>
            <person name="Taki K."/>
            <person name="Tammoja K."/>
            <person name="Tan S.L."/>
            <person name="Tang S."/>
            <person name="Taylor M.S."/>
            <person name="Tegner J."/>
            <person name="Teichmann S.A."/>
            <person name="Ueda H.R."/>
            <person name="van Nimwegen E."/>
            <person name="Verardo R."/>
            <person name="Wei C.L."/>
            <person name="Yagi K."/>
            <person name="Yamanishi H."/>
            <person name="Zabarovsky E."/>
            <person name="Zhu S."/>
            <person name="Zimmer A."/>
            <person name="Hide W."/>
            <person name="Bult C."/>
            <person name="Grimmond S.M."/>
            <person name="Teasdale R.D."/>
            <person name="Liu E.T."/>
            <person name="Brusic V."/>
            <person name="Quackenbush J."/>
            <person name="Wahlestedt C."/>
            <person name="Mattick J.S."/>
            <person name="Hume D.A."/>
            <person name="Kai C."/>
            <person name="Sasaki D."/>
            <person name="Tomaru Y."/>
            <person name="Fukuda S."/>
            <person name="Kanamori-Katayama M."/>
            <person name="Suzuki M."/>
            <person name="Aoki J."/>
            <person name="Arakawa T."/>
            <person name="Iida J."/>
            <person name="Imamura K."/>
            <person name="Itoh M."/>
            <person name="Kato T."/>
            <person name="Kawaji H."/>
            <person name="Kawagashira N."/>
            <person name="Kawashima T."/>
            <person name="Kojima M."/>
            <person name="Kondo S."/>
            <person name="Konno H."/>
            <person name="Nakano K."/>
            <person name="Ninomiya N."/>
            <person name="Nishio T."/>
            <person name="Okada M."/>
            <person name="Plessy C."/>
            <person name="Shibata K."/>
            <person name="Shiraki T."/>
            <person name="Suzuki S."/>
            <person name="Tagami M."/>
            <person name="Waki K."/>
            <person name="Watahiki A."/>
            <person name="Okamura-Oho Y."/>
            <person name="Suzuki H."/>
            <person name="Kawai J."/>
            <person name="Hayashizaki Y."/>
        </authorList>
    </citation>
    <scope>NUCLEOTIDE SEQUENCE [LARGE SCALE MRNA]</scope>
    <source>
        <strain>C57BL/6J</strain>
        <tissue>Adipose tissue</tissue>
    </source>
</reference>
<reference key="3">
    <citation type="journal article" date="2009" name="PLoS Biol.">
        <title>Lineage-specific biology revealed by a finished genome assembly of the mouse.</title>
        <authorList>
            <person name="Church D.M."/>
            <person name="Goodstadt L."/>
            <person name="Hillier L.W."/>
            <person name="Zody M.C."/>
            <person name="Goldstein S."/>
            <person name="She X."/>
            <person name="Bult C.J."/>
            <person name="Agarwala R."/>
            <person name="Cherry J.L."/>
            <person name="DiCuccio M."/>
            <person name="Hlavina W."/>
            <person name="Kapustin Y."/>
            <person name="Meric P."/>
            <person name="Maglott D."/>
            <person name="Birtle Z."/>
            <person name="Marques A.C."/>
            <person name="Graves T."/>
            <person name="Zhou S."/>
            <person name="Teague B."/>
            <person name="Potamousis K."/>
            <person name="Churas C."/>
            <person name="Place M."/>
            <person name="Herschleb J."/>
            <person name="Runnheim R."/>
            <person name="Forrest D."/>
            <person name="Amos-Landgraf J."/>
            <person name="Schwartz D.C."/>
            <person name="Cheng Z."/>
            <person name="Lindblad-Toh K."/>
            <person name="Eichler E.E."/>
            <person name="Ponting C.P."/>
        </authorList>
    </citation>
    <scope>NUCLEOTIDE SEQUENCE [LARGE SCALE GENOMIC DNA]</scope>
    <source>
        <strain>C57BL/6J</strain>
    </source>
</reference>
<reference key="4">
    <citation type="journal article" date="2001" name="Neuron">
        <title>Polyglutamine-expanded ataxin-7 antagonizes CRX function and induces cone-rod dystrophy in a mouse model of SCA7.</title>
        <authorList>
            <person name="La Spada A.R."/>
            <person name="Fu Y.-H."/>
            <person name="Sopher B.L."/>
            <person name="Libby R.T."/>
            <person name="Wang X."/>
            <person name="Li L.Y."/>
            <person name="Einum D.D."/>
            <person name="Huang J."/>
            <person name="Possin D.E."/>
            <person name="Smith A.C."/>
            <person name="Martinez R.A."/>
            <person name="Koszdin K.L."/>
            <person name="Treuting P.M."/>
            <person name="Ware C.B."/>
            <person name="Hurley J.B."/>
            <person name="Ptacek L.J."/>
            <person name="Chen S."/>
        </authorList>
    </citation>
    <scope>FUNCTION</scope>
    <scope>INTERACTION WITH CRX</scope>
</reference>
<reference key="5">
    <citation type="journal article" date="2013" name="Mol. Cell">
        <title>SIRT5-mediated lysine desuccinylation impacts diverse metabolic pathways.</title>
        <authorList>
            <person name="Park J."/>
            <person name="Chen Y."/>
            <person name="Tishkoff D.X."/>
            <person name="Peng C."/>
            <person name="Tan M."/>
            <person name="Dai L."/>
            <person name="Xie Z."/>
            <person name="Zhang Y."/>
            <person name="Zwaans B.M."/>
            <person name="Skinner M.E."/>
            <person name="Lombard D.B."/>
            <person name="Zhao Y."/>
        </authorList>
    </citation>
    <scope>ACETYLATION [LARGE SCALE ANALYSIS] AT LYS-222</scope>
    <scope>IDENTIFICATION BY MASS SPECTROMETRY [LARGE SCALE ANALYSIS]</scope>
    <source>
        <tissue>Embryonic fibroblast</tissue>
    </source>
</reference>
<dbReference type="EMBL" id="AF455111">
    <property type="protein sequence ID" value="AAL84238.1"/>
    <property type="molecule type" value="mRNA"/>
</dbReference>
<dbReference type="EMBL" id="AK046679">
    <property type="protein sequence ID" value="BAC32834.1"/>
    <property type="molecule type" value="mRNA"/>
</dbReference>
<dbReference type="EMBL" id="AC116479">
    <property type="status" value="NOT_ANNOTATED_CDS"/>
    <property type="molecule type" value="Genomic_DNA"/>
</dbReference>
<dbReference type="CCDS" id="CCDS26823.1"/>
<dbReference type="RefSeq" id="NP_631973.3">
    <property type="nucleotide sequence ID" value="NM_139227.4"/>
</dbReference>
<dbReference type="BMRB" id="Q8R4I1"/>
<dbReference type="SMR" id="Q8R4I1"/>
<dbReference type="BioGRID" id="232871">
    <property type="interactions" value="2"/>
</dbReference>
<dbReference type="ComplexPortal" id="CPX-6803">
    <property type="entry name" value="SAGA complex, KAT2B variant"/>
</dbReference>
<dbReference type="ComplexPortal" id="CPX-916">
    <property type="entry name" value="TFTC histone acetylation complex"/>
</dbReference>
<dbReference type="ComplexPortal" id="CPX-920">
    <property type="entry name" value="SAGA complex, KAT2A variant"/>
</dbReference>
<dbReference type="DIP" id="DIP-29176N"/>
<dbReference type="FunCoup" id="Q8R4I1">
    <property type="interactions" value="3054"/>
</dbReference>
<dbReference type="IntAct" id="Q8R4I1">
    <property type="interactions" value="4"/>
</dbReference>
<dbReference type="MINT" id="Q8R4I1"/>
<dbReference type="STRING" id="10090.ENSMUSP00000022257"/>
<dbReference type="GlyGen" id="Q8R4I1">
    <property type="glycosylation" value="4 sites, 1 N-linked glycan (1 site), 1 O-linked glycan (1 site)"/>
</dbReference>
<dbReference type="iPTMnet" id="Q8R4I1"/>
<dbReference type="PhosphoSitePlus" id="Q8R4I1"/>
<dbReference type="PaxDb" id="10090-ENSMUSP00000022257"/>
<dbReference type="ProteomicsDB" id="277229"/>
<dbReference type="Antibodypedia" id="7629">
    <property type="antibodies" value="162 antibodies from 32 providers"/>
</dbReference>
<dbReference type="DNASU" id="246103"/>
<dbReference type="Ensembl" id="ENSMUST00000022257.4">
    <property type="protein sequence ID" value="ENSMUSP00000022257.3"/>
    <property type="gene ID" value="ENSMUSG00000021738.6"/>
</dbReference>
<dbReference type="Ensembl" id="ENSMUST00000223880.2">
    <property type="protein sequence ID" value="ENSMUSP00000152934.2"/>
    <property type="gene ID" value="ENSMUSG00000021738.6"/>
</dbReference>
<dbReference type="GeneID" id="246103"/>
<dbReference type="KEGG" id="mmu:246103"/>
<dbReference type="UCSC" id="uc007sgi.2">
    <property type="organism name" value="mouse"/>
</dbReference>
<dbReference type="AGR" id="MGI:2179277"/>
<dbReference type="CTD" id="6314"/>
<dbReference type="MGI" id="MGI:2179277">
    <property type="gene designation" value="Atxn7"/>
</dbReference>
<dbReference type="VEuPathDB" id="HostDB:ENSMUSG00000021738"/>
<dbReference type="eggNOG" id="KOG4140">
    <property type="taxonomic scope" value="Eukaryota"/>
</dbReference>
<dbReference type="GeneTree" id="ENSGT00940000157279"/>
<dbReference type="HOGENOM" id="CLU_014451_1_0_1"/>
<dbReference type="InParanoid" id="Q8R4I1"/>
<dbReference type="OrthoDB" id="21678at2759"/>
<dbReference type="PhylomeDB" id="Q8R4I1"/>
<dbReference type="TreeFam" id="TF331337"/>
<dbReference type="Reactome" id="R-MMU-5689880">
    <property type="pathway name" value="Ub-specific processing proteases"/>
</dbReference>
<dbReference type="BioGRID-ORCS" id="246103">
    <property type="hits" value="2 hits in 78 CRISPR screens"/>
</dbReference>
<dbReference type="ChiTaRS" id="Atxn7">
    <property type="organism name" value="mouse"/>
</dbReference>
<dbReference type="PRO" id="PR:Q8R4I1"/>
<dbReference type="Proteomes" id="UP000000589">
    <property type="component" value="Chromosome 14"/>
</dbReference>
<dbReference type="RNAct" id="Q8R4I1">
    <property type="molecule type" value="protein"/>
</dbReference>
<dbReference type="Bgee" id="ENSMUSG00000021738">
    <property type="expression patterns" value="Expressed in ganglion of central nervous system and 237 other cell types or tissues"/>
</dbReference>
<dbReference type="ExpressionAtlas" id="Q8R4I1">
    <property type="expression patterns" value="baseline and differential"/>
</dbReference>
<dbReference type="GO" id="GO:0005737">
    <property type="term" value="C:cytoplasm"/>
    <property type="evidence" value="ECO:0000314"/>
    <property type="project" value="MGI"/>
</dbReference>
<dbReference type="GO" id="GO:0005856">
    <property type="term" value="C:cytoskeleton"/>
    <property type="evidence" value="ECO:0007669"/>
    <property type="project" value="UniProtKB-SubCell"/>
</dbReference>
<dbReference type="GO" id="GO:0016363">
    <property type="term" value="C:nuclear matrix"/>
    <property type="evidence" value="ECO:0007669"/>
    <property type="project" value="UniProtKB-SubCell"/>
</dbReference>
<dbReference type="GO" id="GO:0005730">
    <property type="term" value="C:nucleolus"/>
    <property type="evidence" value="ECO:0007669"/>
    <property type="project" value="UniProtKB-SubCell"/>
</dbReference>
<dbReference type="GO" id="GO:0005634">
    <property type="term" value="C:nucleus"/>
    <property type="evidence" value="ECO:0000314"/>
    <property type="project" value="MGI"/>
</dbReference>
<dbReference type="GO" id="GO:0000124">
    <property type="term" value="C:SAGA complex"/>
    <property type="evidence" value="ECO:0000303"/>
    <property type="project" value="ComplexPortal"/>
</dbReference>
<dbReference type="GO" id="GO:0033276">
    <property type="term" value="C:transcription factor TFTC complex"/>
    <property type="evidence" value="ECO:0000303"/>
    <property type="project" value="ComplexPortal"/>
</dbReference>
<dbReference type="GO" id="GO:0003682">
    <property type="term" value="F:chromatin binding"/>
    <property type="evidence" value="ECO:0000314"/>
    <property type="project" value="MGI"/>
</dbReference>
<dbReference type="GO" id="GO:0048009">
    <property type="term" value="P:insulin-like growth factor receptor signaling pathway"/>
    <property type="evidence" value="ECO:0000315"/>
    <property type="project" value="MGI"/>
</dbReference>
<dbReference type="GO" id="GO:0043569">
    <property type="term" value="P:negative regulation of insulin-like growth factor receptor signaling pathway"/>
    <property type="evidence" value="ECO:0000315"/>
    <property type="project" value="MGI"/>
</dbReference>
<dbReference type="GO" id="GO:0045893">
    <property type="term" value="P:positive regulation of DNA-templated transcription"/>
    <property type="evidence" value="ECO:0000303"/>
    <property type="project" value="ComplexPortal"/>
</dbReference>
<dbReference type="GO" id="GO:0045944">
    <property type="term" value="P:positive regulation of transcription by RNA polymerase II"/>
    <property type="evidence" value="ECO:0000315"/>
    <property type="project" value="MGI"/>
</dbReference>
<dbReference type="GO" id="GO:0006282">
    <property type="term" value="P:regulation of DNA repair"/>
    <property type="evidence" value="ECO:0000303"/>
    <property type="project" value="ComplexPortal"/>
</dbReference>
<dbReference type="GO" id="GO:0043484">
    <property type="term" value="P:regulation of RNA splicing"/>
    <property type="evidence" value="ECO:0000303"/>
    <property type="project" value="ComplexPortal"/>
</dbReference>
<dbReference type="GO" id="GO:0006357">
    <property type="term" value="P:regulation of transcription by RNA polymerase II"/>
    <property type="evidence" value="ECO:0000266"/>
    <property type="project" value="ComplexPortal"/>
</dbReference>
<dbReference type="GO" id="GO:0006366">
    <property type="term" value="P:transcription by RNA polymerase II"/>
    <property type="evidence" value="ECO:0000315"/>
    <property type="project" value="MGI"/>
</dbReference>
<dbReference type="Gene3D" id="6.10.140.670">
    <property type="match status" value="1"/>
</dbReference>
<dbReference type="InterPro" id="IPR052237">
    <property type="entry name" value="Ataxin-7-like_regulator"/>
</dbReference>
<dbReference type="InterPro" id="IPR013243">
    <property type="entry name" value="SCA7_dom"/>
</dbReference>
<dbReference type="PANTHER" id="PTHR15117">
    <property type="entry name" value="ATAXIN 7 RELATED"/>
    <property type="match status" value="1"/>
</dbReference>
<dbReference type="PANTHER" id="PTHR15117:SF2">
    <property type="entry name" value="ATAXIN-7"/>
    <property type="match status" value="1"/>
</dbReference>
<dbReference type="Pfam" id="PF08313">
    <property type="entry name" value="SCA7"/>
    <property type="match status" value="1"/>
</dbReference>
<dbReference type="PROSITE" id="PS51505">
    <property type="entry name" value="SCA7"/>
    <property type="match status" value="1"/>
</dbReference>
<sequence length="867" mass="92697">MSERAADDVRGEPRRAAGGAAAARQQQQQPQPLQPQRQHPPLRRPRAEDGGTGDTTTSAAAMATVGERRPLPSPEAMLGQSWNLWVEASKLPGKDGTELDESFKEFGKNREVMGLCREDMPIFGLCPAHDDFYLVVCNDCNQVVKPQAFQSHYERRHSSSSKPALAVPHTSVFSLLPSLSKSKGSGAGGSSRPPSGGVLCASSSSKLLRLPKEKLPLRGNMKPMHPVQQIKVPHGRVMTPSVKVEKMHPKMDGTLLKSTVGPACPATMSSAVKPGLNCPSIPKPTLPSPGQILNGKGLPAMPTLEKKSEDSSNNRKFLNKRLSEREFDPDIHCGVIDLDTKKPCTRSLTCKTHSLTQRRAVQGRRKRFDVLLAEHKNKAREKELIRHDSQQVPHPLRDPHPTPPRTPQEPQLPAESKPFLASKPKPQTPSLPRPPGCPAQQGGSTPIDPPPGQESPHPPLPATEPASRLSSEEGEGDDREESVEKLDCHYSGRHPQPASFCTFGSRQIGRGYYVFDSRWNRLRCALNLMVEKHLNAQLWKKIPPVPCTTSPVSARVPHRTNSVPTSQGGISYLAATTVSAPPVLLSSTCISPNSKSVPAHGTTLNAQPAGSGAMDPVCSVQSRQVSASSSPPSTPSGLSSVPSSPLSRKPQKWKPSKSIRPKESSALSTNCHNASSSTSGGSGKKRKNSSPLLVPSSSSSSSSSSSSSHSVNSFRKNCVAHSGTPYLSTAPSSHSIGLNCVTNKTHSVSLRHEQAGRGPAGVSSAEPIKRMSVMVNSSDSTLSLGPFIHQASELPVNPHSHTPLDKLIGKKRKCSPGSSTVGNSGSKPTKVAKLPAMNNVHMKHTGNISGAQGLTNNSLLHQPKARP</sequence>
<evidence type="ECO:0000250" key="1">
    <source>
        <dbReference type="UniProtKB" id="O15265"/>
    </source>
</evidence>
<evidence type="ECO:0000255" key="2">
    <source>
        <dbReference type="PROSITE-ProRule" id="PRU00838"/>
    </source>
</evidence>
<evidence type="ECO:0000256" key="3">
    <source>
        <dbReference type="SAM" id="MobiDB-lite"/>
    </source>
</evidence>
<evidence type="ECO:0000269" key="4">
    <source>
    </source>
</evidence>
<evidence type="ECO:0000305" key="5"/>
<evidence type="ECO:0000305" key="6">
    <source>
    </source>
</evidence>
<evidence type="ECO:0000312" key="7">
    <source>
        <dbReference type="Proteomes" id="UP000000589"/>
    </source>
</evidence>
<evidence type="ECO:0007744" key="8">
    <source>
    </source>
</evidence>
<gene>
    <name type="primary">Atxn7</name>
    <name type="synonym">Sca7</name>
</gene>
<keyword id="KW-0007">Acetylation</keyword>
<keyword id="KW-0963">Cytoplasm</keyword>
<keyword id="KW-0206">Cytoskeleton</keyword>
<keyword id="KW-1017">Isopeptide bond</keyword>
<keyword id="KW-0539">Nucleus</keyword>
<keyword id="KW-1185">Reference proteome</keyword>
<keyword id="KW-0804">Transcription</keyword>
<keyword id="KW-0805">Transcription regulation</keyword>
<keyword id="KW-0832">Ubl conjugation</keyword>
<feature type="chain" id="PRO_0000064760" description="Ataxin-7">
    <location>
        <begin position="1"/>
        <end position="867"/>
    </location>
</feature>
<feature type="domain" description="SCA7" evidence="2">
    <location>
        <begin position="320"/>
        <end position="387"/>
    </location>
</feature>
<feature type="region of interest" description="Disordered" evidence="3">
    <location>
        <begin position="1"/>
        <end position="59"/>
    </location>
</feature>
<feature type="region of interest" description="Disordered" evidence="3">
    <location>
        <begin position="379"/>
        <end position="483"/>
    </location>
</feature>
<feature type="region of interest" description="Disordered" evidence="3">
    <location>
        <begin position="600"/>
        <end position="711"/>
    </location>
</feature>
<feature type="region of interest" description="Disordered" evidence="3">
    <location>
        <begin position="845"/>
        <end position="867"/>
    </location>
</feature>
<feature type="compositionally biased region" description="Basic and acidic residues" evidence="3">
    <location>
        <begin position="1"/>
        <end position="15"/>
    </location>
</feature>
<feature type="compositionally biased region" description="Low complexity" evidence="3">
    <location>
        <begin position="16"/>
        <end position="39"/>
    </location>
</feature>
<feature type="compositionally biased region" description="Basic and acidic residues" evidence="3">
    <location>
        <begin position="379"/>
        <end position="400"/>
    </location>
</feature>
<feature type="compositionally biased region" description="Pro residues" evidence="3">
    <location>
        <begin position="426"/>
        <end position="437"/>
    </location>
</feature>
<feature type="compositionally biased region" description="Pro residues" evidence="3">
    <location>
        <begin position="447"/>
        <end position="462"/>
    </location>
</feature>
<feature type="compositionally biased region" description="Acidic residues" evidence="3">
    <location>
        <begin position="472"/>
        <end position="481"/>
    </location>
</feature>
<feature type="compositionally biased region" description="Low complexity" evidence="3">
    <location>
        <begin position="619"/>
        <end position="647"/>
    </location>
</feature>
<feature type="compositionally biased region" description="Basic residues" evidence="3">
    <location>
        <begin position="649"/>
        <end position="659"/>
    </location>
</feature>
<feature type="compositionally biased region" description="Polar residues" evidence="3">
    <location>
        <begin position="665"/>
        <end position="674"/>
    </location>
</feature>
<feature type="compositionally biased region" description="Low complexity" evidence="3">
    <location>
        <begin position="689"/>
        <end position="711"/>
    </location>
</feature>
<feature type="compositionally biased region" description="Polar residues" evidence="3">
    <location>
        <begin position="846"/>
        <end position="860"/>
    </location>
</feature>
<feature type="site" description="Cleavage; by caspase-7" evidence="1">
    <location>
        <begin position="252"/>
        <end position="253"/>
    </location>
</feature>
<feature type="site" description="Cleavage; by caspase-7" evidence="1">
    <location>
        <begin position="330"/>
        <end position="331"/>
    </location>
</feature>
<feature type="modified residue" description="N6-acetyllysine" evidence="8">
    <location>
        <position position="222"/>
    </location>
</feature>
<feature type="cross-link" description="Glycyl lysine isopeptide (Lys-Gly) (interchain with G-Cter in SUMO); alternate" evidence="1">
    <location>
        <position position="243"/>
    </location>
</feature>
<feature type="cross-link" description="Glycyl lysine isopeptide (Lys-Gly) (interchain with G-Cter in SUMO2); alternate" evidence="1">
    <location>
        <position position="243"/>
    </location>
</feature>
<feature type="sequence conflict" description="In Ref. 1; AAL84238." evidence="5" ref="1">
    <original>R</original>
    <variation>H</variation>
    <location>
        <position position="110"/>
    </location>
</feature>
<feature type="sequence conflict" description="In Ref. 1; AAL84238." evidence="5" ref="1">
    <original>LPS</original>
    <variation>FPP</variation>
    <location>
        <begin position="176"/>
        <end position="178"/>
    </location>
</feature>
<feature type="sequence conflict" description="In Ref. 1; AAL84238." evidence="5" ref="1">
    <original>V</original>
    <variation>A</variation>
    <location>
        <position position="232"/>
    </location>
</feature>
<feature type="sequence conflict" description="In Ref. 1; AAL84238." evidence="5" ref="1">
    <original>S</original>
    <variation>L</variation>
    <location>
        <position position="626"/>
    </location>
</feature>
<protein>
    <recommendedName>
        <fullName>Ataxin-7</fullName>
    </recommendedName>
    <alternativeName>
        <fullName>Spinocerebellar ataxia type 7 protein homolog</fullName>
    </alternativeName>
</protein>
<name>ATX7_MOUSE</name>
<accession>Q8R4I1</accession>
<accession>E9QPX9</accession>
<accession>Q8BL17</accession>
<comment type="function">
    <text evidence="1 6">Acts as a component of the SAGA (aka STAGA) transcription coactivator-HAT complex (By similarity). Mediates the interaction of SAGA complex with the CRX and is involved in CRX-dependent gene activation (By similarity). Probably involved in tethering the deubiquitination module within the SAGA complex (By similarity). Necessary for microtubule cytoskeleton stabilization (By similarity). Involved in neurodegeneration (Probable).</text>
</comment>
<comment type="subunit">
    <text evidence="1">Component of the SAGA transcription coactivator-HAT complex, at least composed of SUPT3H, GCN5L2, TAF5L, TAF6L, SUPT7L, TADA3L, TAD1L, TAF10, TAF12, TRRAP, TAF9 and ATXN7. The STAGA core complex is associated with a subcomplex required for histone deubiquitination composed of ATXN7L3, ENY2 and USP22. Interacts with SORBS1, PSMC1 and CRX. Interacts with TRRAP, GCN5L2 and TAF10 (By similarity). Interacts with alpha tubulin (By similarity).</text>
</comment>
<comment type="interaction">
    <interactant intactId="EBI-7990748">
        <id>Q8R4I1</id>
    </interactant>
    <interactant intactId="EBI-2942477">
        <id>Q80YV3</id>
        <label>Trrap</label>
    </interactant>
    <organismsDiffer>false</organismsDiffer>
    <experiments>3</experiments>
</comment>
<comment type="subcellular location">
    <subcellularLocation>
        <location evidence="1">Nucleus</location>
    </subcellularLocation>
    <subcellularLocation>
        <location evidence="1">Nucleus</location>
        <location evidence="1">Nucleolus</location>
    </subcellularLocation>
    <subcellularLocation>
        <location evidence="1">Nucleus matrix</location>
    </subcellularLocation>
    <subcellularLocation>
        <location evidence="1">Cytoplasm</location>
        <location evidence="1">Cytoskeleton</location>
    </subcellularLocation>
    <text evidence="1">In addition to a diffuse distribution throughout the nucleus, it is associated with the nuclear matrix and the nucleolus. It is able to shuttle between the nucleus and cytoplasm (By similarity).</text>
</comment>
<comment type="tissue specificity">
    <text evidence="4">Widely expressed in adult tissues, with the highest expression in heart, brain, liver and kidney.</text>
</comment>
<comment type="PTM">
    <text evidence="1">Proteolytically cleaved by caspase-7 (CASP7).</text>
</comment>
<comment type="PTM">
    <text evidence="1">Sumoylation has no effect on subcellular location or interaction with components of the STAGA complex.</text>
</comment>
<comment type="similarity">
    <text evidence="5">Belongs to the ataxin-7 family.</text>
</comment>